<comment type="function">
    <text evidence="2 8">Testis-specific potassium channel activated by both intracellular pH and membrane voltage that mediates export of K(+) (PubMed:32335912). Represents the primary spermatozoan K(+) current. The channel underlies a pH-triggered membrane hyperpolarization during the process of sperm capacitation, as sperm encounter the alkaline environment near the ovum in the female reproductive tract, thereby playing an essential for male fertility (By similarity).</text>
</comment>
<comment type="catalytic activity">
    <reaction evidence="3">
        <text>K(+)(in) = K(+)(out)</text>
        <dbReference type="Rhea" id="RHEA:29463"/>
        <dbReference type="ChEBI" id="CHEBI:29103"/>
    </reaction>
</comment>
<comment type="activity regulation">
    <text evidence="2 8">Regulated by changes in cytosolic pH; activated by alkalization. Not activated by intracellular Ca(2+) (PubMed:32335912). VU0546110 acts as a selective inhibitor (By similarity). The auxiliary subunit LRRC52 shifts the activation of KCNU1 to more negative potentials at a given pH (PubMed:32335912).</text>
</comment>
<comment type="subunit">
    <text evidence="2 4">Homotetramer; which constitutes the activated potassium channel (By similarity). Interacts with LRRC52; this interaction changes channel gating properties, such as shifting gating to more negative potentials at a given pH (By similarity).</text>
</comment>
<comment type="subcellular location">
    <subcellularLocation>
        <location evidence="3">Cell membrane</location>
        <topology evidence="5">Multi-pass membrane protein</topology>
    </subcellularLocation>
    <subcellularLocation>
        <location evidence="2">Cell projection</location>
        <location evidence="2">Cilium</location>
        <location evidence="2">Flagellum membrane</location>
        <topology evidence="5">Multi-pass membrane protein</topology>
    </subcellularLocation>
</comment>
<comment type="domain">
    <text evidence="1">The S4 segment, which is characterized by a series of positively charged amino acids at every third position, is part of the voltage-sensor.</text>
</comment>
<comment type="domain">
    <text evidence="1">The pore-forming domain (also referred as P region) is imbedded into the membrane, and forms the selectivity filter of the pore. It contains the signature sequence of potassium channels that displays selectivity to potassium (By similarity).</text>
</comment>
<comment type="domain">
    <text evidence="4">The RCK N-terminal domain mediates the homotetramerization, thereby promoting the assembly of monomers into functional potassium channel.</text>
</comment>
<comment type="domain">
    <text evidence="1">The C-terminal cytosolic region confers the pH-dependence.</text>
</comment>
<comment type="similarity">
    <text evidence="10">Belongs to the potassium channel family. Calcium-activated (TC 1.A.1.3) subfamily. KCa1.1/KCNMA1 sub-subfamily.</text>
</comment>
<accession>D4A6Z8</accession>
<name>KCNU1_RAT</name>
<protein>
    <recommendedName>
        <fullName>Potassium channel subfamily U member 1</fullName>
    </recommendedName>
    <alternativeName>
        <fullName>BK channel</fullName>
    </alternativeName>
    <alternativeName>
        <fullName>Calcium-activated potassium channel subunit alpha-3</fullName>
    </alternativeName>
    <alternativeName>
        <fullName evidence="9">KCa5.1</fullName>
    </alternativeName>
    <alternativeName>
        <fullName>Pore-forming subunit of the sperm-specific alkalization activated K(+) current</fullName>
        <shortName>KSper</shortName>
    </alternativeName>
    <alternativeName>
        <fullName>Slowpoke homolog 3</fullName>
        <shortName evidence="9">rSlo3</shortName>
    </alternativeName>
</protein>
<gene>
    <name type="primary">Kcnu1</name>
    <name type="synonym">Kcnma3</name>
    <name type="synonym">Ksper</name>
    <name type="synonym">Slo3</name>
</gene>
<evidence type="ECO:0000250" key="1"/>
<evidence type="ECO:0000250" key="2">
    <source>
        <dbReference type="UniProtKB" id="A8MYU2"/>
    </source>
</evidence>
<evidence type="ECO:0000250" key="3">
    <source>
        <dbReference type="UniProtKB" id="O54982"/>
    </source>
</evidence>
<evidence type="ECO:0000250" key="4">
    <source>
        <dbReference type="UniProtKB" id="Q12791"/>
    </source>
</evidence>
<evidence type="ECO:0000255" key="5"/>
<evidence type="ECO:0000255" key="6">
    <source>
        <dbReference type="PROSITE-ProRule" id="PRU00543"/>
    </source>
</evidence>
<evidence type="ECO:0000256" key="7">
    <source>
        <dbReference type="SAM" id="MobiDB-lite"/>
    </source>
</evidence>
<evidence type="ECO:0000269" key="8">
    <source>
    </source>
</evidence>
<evidence type="ECO:0000303" key="9">
    <source>
    </source>
</evidence>
<evidence type="ECO:0000305" key="10"/>
<keyword id="KW-0106">Calcium</keyword>
<keyword id="KW-1003">Cell membrane</keyword>
<keyword id="KW-0966">Cell projection</keyword>
<keyword id="KW-0969">Cilium</keyword>
<keyword id="KW-0282">Flagellum</keyword>
<keyword id="KW-0407">Ion channel</keyword>
<keyword id="KW-0406">Ion transport</keyword>
<keyword id="KW-0472">Membrane</keyword>
<keyword id="KW-0630">Potassium</keyword>
<keyword id="KW-0631">Potassium channel</keyword>
<keyword id="KW-0633">Potassium transport</keyword>
<keyword id="KW-1185">Reference proteome</keyword>
<keyword id="KW-0812">Transmembrane</keyword>
<keyword id="KW-1133">Transmembrane helix</keyword>
<keyword id="KW-0813">Transport</keyword>
<keyword id="KW-0851">Voltage-gated channel</keyword>
<proteinExistence type="evidence at protein level"/>
<sequence>MSQTLLDNLNKKELTETSCTIEIQAAFILSSLATFFGGLIVLFIFRIALKISRNWKTVKGPRGILELFSSRRIEVNPLRKLYFHGVFRERIEMLLSAQTIVGQVLVILVFVLSIGSLVIYFINSMDPVRKCSSYEDKIVHVDLSFNAFFSFYFGLRFWAAEDKIKFWLEMNSIVDIFTIPPTFISYYLKSNWLGLRFLRALRLLELPKILQILQVIKTSNSVKLSKLMSIVISTWFTAAGFLHLVENSGDPWLNGRNSQTMSYFESIYLVTATMSTVGFGDVVAKTSLGRIFIVFFTLGSLILFANYIPEMVELFSTRKKYNKPYEAVKGKKFIVVCGNITIDSVTAFLRNFLHRKAGEINIEIVFLGEAPPSVELETLLKCHTSCTTFVCGTALKFEDLKRVAVENAEACLILANPFCSDLHDEDNSNIMRVLSIKNYYPQTRVIIQMLQSQNKVFLSRIPNWNWSAGDNIICFAELKLGFIAQGCLVPGLCTFLTTLFIEQNQKVFPKHPWQKHFLNGLKNKILTQRLSNDFVGMTFPQVSRLCFLKMHLMLIAIQHKPLFHNCCSLILNPSSQVRLNKDTLGFFIAESSKDVKRALFYCSNCHSDVCNPELIGKCGCKNRSRQQLVAPTIMVMQSSLNEFAPTAEIYTSISREQTSSVTILTTRNMPVDTADDSDMLDSSGMFHWCRSMPLDKVVLKRSDKATHEFQNHIVACVFGDAHSSLMGLRNFVMPLRASNYTRQELKDIVFIGSLEYFQREWRFLRNFPKIHIMPGSALYTGDLHAVNVEQCSMCVILATPYKALSSQLLVDTETIMATLNIQALRISCPMSGSSKKEVNTSPTFSKYEGKQRYQQIPILTELKNPSNIHFIEQMDGLDEAIKGTSLHLSTAFSTGTVFSGTFLDSLLATAFYNYHVLELLQMLVTGGINSQTEHCLVKEKLYEGNEGGATFLSGRTRCKLGLLSLDETILSDIKPKKTFGQLFCGSLDNLGILCVGLYRMMDEGEHNSERKRFVITRPANECHLLPSDLVFCAIPFSITCDKSESNASIQDQDTTTNVTSMSQGSNFQGAQSALNEHSLSPASAMGEKKSPQLLNSRVYPLNLFDASDIDPGK</sequence>
<dbReference type="EMBL" id="AABR07026298">
    <property type="status" value="NOT_ANNOTATED_CDS"/>
    <property type="molecule type" value="Genomic_DNA"/>
</dbReference>
<dbReference type="EMBL" id="AABR07026297">
    <property type="status" value="NOT_ANNOTATED_CDS"/>
    <property type="molecule type" value="Genomic_DNA"/>
</dbReference>
<dbReference type="EMBL" id="AABR07026296">
    <property type="status" value="NOT_ANNOTATED_CDS"/>
    <property type="molecule type" value="Genomic_DNA"/>
</dbReference>
<dbReference type="EMBL" id="AABR07026295">
    <property type="status" value="NOT_ANNOTATED_CDS"/>
    <property type="molecule type" value="Genomic_DNA"/>
</dbReference>
<dbReference type="EMBL" id="AABR07026294">
    <property type="status" value="NOT_ANNOTATED_CDS"/>
    <property type="molecule type" value="Genomic_DNA"/>
</dbReference>
<dbReference type="RefSeq" id="XP_006222332.1">
    <property type="nucleotide sequence ID" value="XM_006222270.3"/>
</dbReference>
<dbReference type="RefSeq" id="XP_006253398.1">
    <property type="nucleotide sequence ID" value="XM_006253336.3"/>
</dbReference>
<dbReference type="RefSeq" id="XP_063132048.1">
    <property type="nucleotide sequence ID" value="XM_063275978.1"/>
</dbReference>
<dbReference type="SMR" id="D4A6Z8"/>
<dbReference type="FunCoup" id="D4A6Z8">
    <property type="interactions" value="6"/>
</dbReference>
<dbReference type="STRING" id="10116.ENSRNOP00000019935"/>
<dbReference type="PhosphoSitePlus" id="D4A6Z8"/>
<dbReference type="PaxDb" id="10116-ENSRNOP00000019935"/>
<dbReference type="Ensembl" id="ENSRNOT00000019935.8">
    <property type="protein sequence ID" value="ENSRNOP00000019935.7"/>
    <property type="gene ID" value="ENSRNOG00000014741.8"/>
</dbReference>
<dbReference type="Ensembl" id="ENSRNOT00055012845">
    <property type="protein sequence ID" value="ENSRNOP00055010237"/>
    <property type="gene ID" value="ENSRNOG00055007681"/>
</dbReference>
<dbReference type="Ensembl" id="ENSRNOT00060020886">
    <property type="protein sequence ID" value="ENSRNOP00060016463"/>
    <property type="gene ID" value="ENSRNOG00060012318"/>
</dbReference>
<dbReference type="GeneID" id="680912"/>
<dbReference type="AGR" id="RGD:1585877"/>
<dbReference type="RGD" id="1585877">
    <property type="gene designation" value="Kcnu1"/>
</dbReference>
<dbReference type="eggNOG" id="KOG1420">
    <property type="taxonomic scope" value="Eukaryota"/>
</dbReference>
<dbReference type="GeneTree" id="ENSGT00940000161817"/>
<dbReference type="HOGENOM" id="CLU_006846_0_0_1"/>
<dbReference type="InParanoid" id="D4A6Z8"/>
<dbReference type="OMA" id="NWNTGDN"/>
<dbReference type="OrthoDB" id="10035564at2759"/>
<dbReference type="TreeFam" id="TF314283"/>
<dbReference type="Reactome" id="R-RNO-1300642">
    <property type="pathway name" value="Sperm Motility And Taxes"/>
</dbReference>
<dbReference type="Proteomes" id="UP000002494">
    <property type="component" value="Chromosome 16"/>
</dbReference>
<dbReference type="Bgee" id="ENSRNOG00000014741">
    <property type="expression patterns" value="Expressed in testis"/>
</dbReference>
<dbReference type="GO" id="GO:0016020">
    <property type="term" value="C:membrane"/>
    <property type="evidence" value="ECO:0000318"/>
    <property type="project" value="GO_Central"/>
</dbReference>
<dbReference type="GO" id="GO:0034702">
    <property type="term" value="C:monoatomic ion channel complex"/>
    <property type="evidence" value="ECO:0007669"/>
    <property type="project" value="UniProtKB-KW"/>
</dbReference>
<dbReference type="GO" id="GO:0005886">
    <property type="term" value="C:plasma membrane"/>
    <property type="evidence" value="ECO:0000250"/>
    <property type="project" value="UniProtKB"/>
</dbReference>
<dbReference type="GO" id="GO:0036126">
    <property type="term" value="C:sperm flagellum"/>
    <property type="evidence" value="ECO:0000250"/>
    <property type="project" value="UniProtKB"/>
</dbReference>
<dbReference type="GO" id="GO:0005267">
    <property type="term" value="F:potassium channel activity"/>
    <property type="evidence" value="ECO:0000266"/>
    <property type="project" value="RGD"/>
</dbReference>
<dbReference type="GO" id="GO:0051649">
    <property type="term" value="P:establishment of localization in cell"/>
    <property type="evidence" value="ECO:0000266"/>
    <property type="project" value="RGD"/>
</dbReference>
<dbReference type="GO" id="GO:0009566">
    <property type="term" value="P:fertilization"/>
    <property type="evidence" value="ECO:0000266"/>
    <property type="project" value="RGD"/>
</dbReference>
<dbReference type="GO" id="GO:0071805">
    <property type="term" value="P:potassium ion transmembrane transport"/>
    <property type="evidence" value="ECO:0000314"/>
    <property type="project" value="UniProtKB"/>
</dbReference>
<dbReference type="GO" id="GO:0006813">
    <property type="term" value="P:potassium ion transport"/>
    <property type="evidence" value="ECO:0000266"/>
    <property type="project" value="RGD"/>
</dbReference>
<dbReference type="GO" id="GO:0050821">
    <property type="term" value="P:protein stabilization"/>
    <property type="evidence" value="ECO:0000266"/>
    <property type="project" value="RGD"/>
</dbReference>
<dbReference type="FunFam" id="3.40.50.720:FF:000005">
    <property type="entry name" value="calcium-activated potassium channel subunit alpha-1 isoform X6"/>
    <property type="match status" value="1"/>
</dbReference>
<dbReference type="FunFam" id="1.10.287.70:FF:000130">
    <property type="entry name" value="Potassium calcium-activated channel subfamily U member 1"/>
    <property type="match status" value="1"/>
</dbReference>
<dbReference type="FunFam" id="3.40.50.720:FF:000403">
    <property type="entry name" value="Potassium calcium-activated channel subfamily U member 1"/>
    <property type="match status" value="1"/>
</dbReference>
<dbReference type="Gene3D" id="1.10.287.70">
    <property type="match status" value="1"/>
</dbReference>
<dbReference type="Gene3D" id="3.40.50.720">
    <property type="entry name" value="NAD(P)-binding Rossmann-like Domain"/>
    <property type="match status" value="2"/>
</dbReference>
<dbReference type="InterPro" id="IPR005821">
    <property type="entry name" value="Ion_trans_dom"/>
</dbReference>
<dbReference type="InterPro" id="IPR003929">
    <property type="entry name" value="K_chnl_BK_asu"/>
</dbReference>
<dbReference type="InterPro" id="IPR047871">
    <property type="entry name" value="K_chnl_Slo-like"/>
</dbReference>
<dbReference type="InterPro" id="IPR036291">
    <property type="entry name" value="NAD(P)-bd_dom_sf"/>
</dbReference>
<dbReference type="InterPro" id="IPR003148">
    <property type="entry name" value="RCK_N"/>
</dbReference>
<dbReference type="InterPro" id="IPR048735">
    <property type="entry name" value="Slowpoke-like_C"/>
</dbReference>
<dbReference type="PANTHER" id="PTHR10027">
    <property type="entry name" value="CALCIUM-ACTIVATED POTASSIUM CHANNEL ALPHA CHAIN"/>
    <property type="match status" value="1"/>
</dbReference>
<dbReference type="PANTHER" id="PTHR10027:SF23">
    <property type="entry name" value="POTASSIUM CHANNEL SUBFAMILY U MEMBER 1"/>
    <property type="match status" value="1"/>
</dbReference>
<dbReference type="Pfam" id="PF03493">
    <property type="entry name" value="BK_channel_a"/>
    <property type="match status" value="1"/>
</dbReference>
<dbReference type="Pfam" id="PF00520">
    <property type="entry name" value="Ion_trans"/>
    <property type="match status" value="1"/>
</dbReference>
<dbReference type="Pfam" id="PF22614">
    <property type="entry name" value="Slo-like_RCK"/>
    <property type="match status" value="2"/>
</dbReference>
<dbReference type="Pfam" id="PF21014">
    <property type="entry name" value="Slowpoke_C"/>
    <property type="match status" value="1"/>
</dbReference>
<dbReference type="PRINTS" id="PR01449">
    <property type="entry name" value="BKCHANNELA"/>
</dbReference>
<dbReference type="PRINTS" id="PR00169">
    <property type="entry name" value="KCHANNEL"/>
</dbReference>
<dbReference type="SUPFAM" id="SSF51735">
    <property type="entry name" value="NAD(P)-binding Rossmann-fold domains"/>
    <property type="match status" value="1"/>
</dbReference>
<dbReference type="SUPFAM" id="SSF81324">
    <property type="entry name" value="Voltage-gated potassium channels"/>
    <property type="match status" value="1"/>
</dbReference>
<dbReference type="PROSITE" id="PS51201">
    <property type="entry name" value="RCK_N"/>
    <property type="match status" value="2"/>
</dbReference>
<feature type="chain" id="PRO_0000460585" description="Potassium channel subfamily U member 1">
    <location>
        <begin position="1"/>
        <end position="1113"/>
    </location>
</feature>
<feature type="topological domain" description="Extracellular" evidence="10">
    <location>
        <begin position="1"/>
        <end position="24"/>
    </location>
</feature>
<feature type="transmembrane region" description="Helical; Name=Segment S0" evidence="5">
    <location>
        <begin position="25"/>
        <end position="45"/>
    </location>
</feature>
<feature type="topological domain" description="Cytoplasmic" evidence="5">
    <location>
        <begin position="46"/>
        <end position="101"/>
    </location>
</feature>
<feature type="transmembrane region" description="Helical; Name=Segment S1" evidence="5">
    <location>
        <begin position="102"/>
        <end position="122"/>
    </location>
</feature>
<feature type="topological domain" description="Extracellular" evidence="5">
    <location>
        <begin position="123"/>
        <end position="137"/>
    </location>
</feature>
<feature type="transmembrane region" description="Helical; Name=Segment S2" evidence="5">
    <location>
        <begin position="138"/>
        <end position="158"/>
    </location>
</feature>
<feature type="topological domain" description="Cytoplasmic" evidence="5">
    <location>
        <begin position="159"/>
        <end position="165"/>
    </location>
</feature>
<feature type="transmembrane region" description="Helical; Name=Segment S3" evidence="5">
    <location>
        <begin position="166"/>
        <end position="186"/>
    </location>
</feature>
<feature type="topological domain" description="Extracellular" evidence="5">
    <location>
        <begin position="187"/>
        <end position="188"/>
    </location>
</feature>
<feature type="transmembrane region" description="Helical; Voltage-sensor; Name=Segment S4" evidence="5">
    <location>
        <begin position="189"/>
        <end position="209"/>
    </location>
</feature>
<feature type="topological domain" description="Cytoplasmic" evidence="5">
    <location>
        <begin position="210"/>
        <end position="226"/>
    </location>
</feature>
<feature type="transmembrane region" description="Helical; Name=Segment S5" evidence="5">
    <location>
        <begin position="227"/>
        <end position="247"/>
    </location>
</feature>
<feature type="topological domain" description="Extracellular" evidence="5">
    <location>
        <begin position="248"/>
        <end position="259"/>
    </location>
</feature>
<feature type="intramembrane region" description="Pore-forming; Name=P region" evidence="5">
    <location>
        <begin position="260"/>
        <end position="282"/>
    </location>
</feature>
<feature type="topological domain" description="Extracellular" evidence="5">
    <location>
        <begin position="283"/>
        <end position="290"/>
    </location>
</feature>
<feature type="transmembrane region" description="Helical; Name=Segment S6" evidence="5">
    <location>
        <begin position="291"/>
        <end position="311"/>
    </location>
</feature>
<feature type="topological domain" description="Cytoplasmic" evidence="10">
    <location>
        <begin position="312"/>
        <end position="1113"/>
    </location>
</feature>
<feature type="domain" description="RCK N-terminal 1" evidence="6">
    <location>
        <begin position="331"/>
        <end position="473"/>
    </location>
</feature>
<feature type="domain" description="RCK N-terminal 2" evidence="6">
    <location>
        <begin position="710"/>
        <end position="881"/>
    </location>
</feature>
<feature type="region of interest" description="Disordered" evidence="7">
    <location>
        <begin position="1047"/>
        <end position="1091"/>
    </location>
</feature>
<feature type="compositionally biased region" description="Polar residues" evidence="7">
    <location>
        <begin position="1047"/>
        <end position="1081"/>
    </location>
</feature>
<organism>
    <name type="scientific">Rattus norvegicus</name>
    <name type="common">Rat</name>
    <dbReference type="NCBI Taxonomy" id="10116"/>
    <lineage>
        <taxon>Eukaryota</taxon>
        <taxon>Metazoa</taxon>
        <taxon>Chordata</taxon>
        <taxon>Craniata</taxon>
        <taxon>Vertebrata</taxon>
        <taxon>Euteleostomi</taxon>
        <taxon>Mammalia</taxon>
        <taxon>Eutheria</taxon>
        <taxon>Euarchontoglires</taxon>
        <taxon>Glires</taxon>
        <taxon>Rodentia</taxon>
        <taxon>Myomorpha</taxon>
        <taxon>Muroidea</taxon>
        <taxon>Muridae</taxon>
        <taxon>Murinae</taxon>
        <taxon>Rattus</taxon>
    </lineage>
</organism>
<reference key="1">
    <citation type="journal article" date="2004" name="Nature">
        <title>Genome sequence of the Brown Norway rat yields insights into mammalian evolution.</title>
        <authorList>
            <person name="Gibbs R.A."/>
            <person name="Weinstock G.M."/>
            <person name="Metzker M.L."/>
            <person name="Muzny D.M."/>
            <person name="Sodergren E.J."/>
            <person name="Scherer S."/>
            <person name="Scott G."/>
            <person name="Steffen D."/>
            <person name="Worley K.C."/>
            <person name="Burch P.E."/>
            <person name="Okwuonu G."/>
            <person name="Hines S."/>
            <person name="Lewis L."/>
            <person name="Deramo C."/>
            <person name="Delgado O."/>
            <person name="Dugan-Rocha S."/>
            <person name="Miner G."/>
            <person name="Morgan M."/>
            <person name="Hawes A."/>
            <person name="Gill R."/>
            <person name="Holt R.A."/>
            <person name="Adams M.D."/>
            <person name="Amanatides P.G."/>
            <person name="Baden-Tillson H."/>
            <person name="Barnstead M."/>
            <person name="Chin S."/>
            <person name="Evans C.A."/>
            <person name="Ferriera S."/>
            <person name="Fosler C."/>
            <person name="Glodek A."/>
            <person name="Gu Z."/>
            <person name="Jennings D."/>
            <person name="Kraft C.L."/>
            <person name="Nguyen T."/>
            <person name="Pfannkoch C.M."/>
            <person name="Sitter C."/>
            <person name="Sutton G.G."/>
            <person name="Venter J.C."/>
            <person name="Woodage T."/>
            <person name="Smith D."/>
            <person name="Lee H.-M."/>
            <person name="Gustafson E."/>
            <person name="Cahill P."/>
            <person name="Kana A."/>
            <person name="Doucette-Stamm L."/>
            <person name="Weinstock K."/>
            <person name="Fechtel K."/>
            <person name="Weiss R.B."/>
            <person name="Dunn D.M."/>
            <person name="Green E.D."/>
            <person name="Blakesley R.W."/>
            <person name="Bouffard G.G."/>
            <person name="De Jong P.J."/>
            <person name="Osoegawa K."/>
            <person name="Zhu B."/>
            <person name="Marra M."/>
            <person name="Schein J."/>
            <person name="Bosdet I."/>
            <person name="Fjell C."/>
            <person name="Jones S."/>
            <person name="Krzywinski M."/>
            <person name="Mathewson C."/>
            <person name="Siddiqui A."/>
            <person name="Wye N."/>
            <person name="McPherson J."/>
            <person name="Zhao S."/>
            <person name="Fraser C.M."/>
            <person name="Shetty J."/>
            <person name="Shatsman S."/>
            <person name="Geer K."/>
            <person name="Chen Y."/>
            <person name="Abramzon S."/>
            <person name="Nierman W.C."/>
            <person name="Havlak P.H."/>
            <person name="Chen R."/>
            <person name="Durbin K.J."/>
            <person name="Egan A."/>
            <person name="Ren Y."/>
            <person name="Song X.-Z."/>
            <person name="Li B."/>
            <person name="Liu Y."/>
            <person name="Qin X."/>
            <person name="Cawley S."/>
            <person name="Cooney A.J."/>
            <person name="D'Souza L.M."/>
            <person name="Martin K."/>
            <person name="Wu J.Q."/>
            <person name="Gonzalez-Garay M.L."/>
            <person name="Jackson A.R."/>
            <person name="Kalafus K.J."/>
            <person name="McLeod M.P."/>
            <person name="Milosavljevic A."/>
            <person name="Virk D."/>
            <person name="Volkov A."/>
            <person name="Wheeler D.A."/>
            <person name="Zhang Z."/>
            <person name="Bailey J.A."/>
            <person name="Eichler E.E."/>
            <person name="Tuzun E."/>
            <person name="Birney E."/>
            <person name="Mongin E."/>
            <person name="Ureta-Vidal A."/>
            <person name="Woodwark C."/>
            <person name="Zdobnov E."/>
            <person name="Bork P."/>
            <person name="Suyama M."/>
            <person name="Torrents D."/>
            <person name="Alexandersson M."/>
            <person name="Trask B.J."/>
            <person name="Young J.M."/>
            <person name="Huang H."/>
            <person name="Wang H."/>
            <person name="Xing H."/>
            <person name="Daniels S."/>
            <person name="Gietzen D."/>
            <person name="Schmidt J."/>
            <person name="Stevens K."/>
            <person name="Vitt U."/>
            <person name="Wingrove J."/>
            <person name="Camara F."/>
            <person name="Mar Alba M."/>
            <person name="Abril J.F."/>
            <person name="Guigo R."/>
            <person name="Smit A."/>
            <person name="Dubchak I."/>
            <person name="Rubin E.M."/>
            <person name="Couronne O."/>
            <person name="Poliakov A."/>
            <person name="Huebner N."/>
            <person name="Ganten D."/>
            <person name="Goesele C."/>
            <person name="Hummel O."/>
            <person name="Kreitler T."/>
            <person name="Lee Y.-A."/>
            <person name="Monti J."/>
            <person name="Schulz H."/>
            <person name="Zimdahl H."/>
            <person name="Himmelbauer H."/>
            <person name="Lehrach H."/>
            <person name="Jacob H.J."/>
            <person name="Bromberg S."/>
            <person name="Gullings-Handley J."/>
            <person name="Jensen-Seaman M.I."/>
            <person name="Kwitek A.E."/>
            <person name="Lazar J."/>
            <person name="Pasko D."/>
            <person name="Tonellato P.J."/>
            <person name="Twigger S."/>
            <person name="Ponting C.P."/>
            <person name="Duarte J.M."/>
            <person name="Rice S."/>
            <person name="Goodstadt L."/>
            <person name="Beatson S.A."/>
            <person name="Emes R.D."/>
            <person name="Winter E.E."/>
            <person name="Webber C."/>
            <person name="Brandt P."/>
            <person name="Nyakatura G."/>
            <person name="Adetobi M."/>
            <person name="Chiaromonte F."/>
            <person name="Elnitski L."/>
            <person name="Eswara P."/>
            <person name="Hardison R.C."/>
            <person name="Hou M."/>
            <person name="Kolbe D."/>
            <person name="Makova K."/>
            <person name="Miller W."/>
            <person name="Nekrutenko A."/>
            <person name="Riemer C."/>
            <person name="Schwartz S."/>
            <person name="Taylor J."/>
            <person name="Yang S."/>
            <person name="Zhang Y."/>
            <person name="Lindpaintner K."/>
            <person name="Andrews T.D."/>
            <person name="Caccamo M."/>
            <person name="Clamp M."/>
            <person name="Clarke L."/>
            <person name="Curwen V."/>
            <person name="Durbin R.M."/>
            <person name="Eyras E."/>
            <person name="Searle S.M."/>
            <person name="Cooper G.M."/>
            <person name="Batzoglou S."/>
            <person name="Brudno M."/>
            <person name="Sidow A."/>
            <person name="Stone E.A."/>
            <person name="Payseur B.A."/>
            <person name="Bourque G."/>
            <person name="Lopez-Otin C."/>
            <person name="Puente X.S."/>
            <person name="Chakrabarti K."/>
            <person name="Chatterji S."/>
            <person name="Dewey C."/>
            <person name="Pachter L."/>
            <person name="Bray N."/>
            <person name="Yap V.B."/>
            <person name="Caspi A."/>
            <person name="Tesler G."/>
            <person name="Pevzner P.A."/>
            <person name="Haussler D."/>
            <person name="Roskin K.M."/>
            <person name="Baertsch R."/>
            <person name="Clawson H."/>
            <person name="Furey T.S."/>
            <person name="Hinrichs A.S."/>
            <person name="Karolchik D."/>
            <person name="Kent W.J."/>
            <person name="Rosenbloom K.R."/>
            <person name="Trumbower H."/>
            <person name="Weirauch M."/>
            <person name="Cooper D.N."/>
            <person name="Stenson P.D."/>
            <person name="Ma B."/>
            <person name="Brent M."/>
            <person name="Arumugam M."/>
            <person name="Shteynberg D."/>
            <person name="Copley R.R."/>
            <person name="Taylor M.S."/>
            <person name="Riethman H."/>
            <person name="Mudunuri U."/>
            <person name="Peterson J."/>
            <person name="Guyer M."/>
            <person name="Felsenfeld A."/>
            <person name="Old S."/>
            <person name="Mockrin S."/>
            <person name="Collins F.S."/>
        </authorList>
    </citation>
    <scope>NUCLEOTIDE SEQUENCE [LARGE SCALE GENOMIC DNA]</scope>
    <source>
        <strain>Brown Norway</strain>
    </source>
</reference>
<reference key="2">
    <citation type="journal article" date="2012" name="Nat. Commun.">
        <title>Quantitative maps of protein phosphorylation sites across 14 different rat organs and tissues.</title>
        <authorList>
            <person name="Lundby A."/>
            <person name="Secher A."/>
            <person name="Lage K."/>
            <person name="Nordsborg N.B."/>
            <person name="Dmytriyev A."/>
            <person name="Lundby C."/>
            <person name="Olsen J.V."/>
        </authorList>
    </citation>
    <scope>IDENTIFICATION BY MASS SPECTROMETRY [LARGE SCALE ANALYSIS]</scope>
</reference>
<reference key="3">
    <citation type="journal article" date="2020" name="Br. J. Pharmacol.">
        <title>Cloning and characterization of the rat Slo3 (KCa 5.1) channel: From biophysics to pharmacology.</title>
        <authorList>
            <person name="Wang G.M."/>
            <person name="Zhong Z.G."/>
            <person name="Du X.R."/>
            <person name="Zhang F.F."/>
            <person name="Guo Q."/>
            <person name="Liu Y."/>
            <person name="Tang Q.Y."/>
            <person name="Zhang Z."/>
        </authorList>
    </citation>
    <scope>FUNCTION</scope>
    <scope>ACTIVITY REGULATION</scope>
</reference>